<reference key="1">
    <citation type="journal article" date="2001" name="Nature">
        <title>Genome sequence of Yersinia pestis, the causative agent of plague.</title>
        <authorList>
            <person name="Parkhill J."/>
            <person name="Wren B.W."/>
            <person name="Thomson N.R."/>
            <person name="Titball R.W."/>
            <person name="Holden M.T.G."/>
            <person name="Prentice M.B."/>
            <person name="Sebaihia M."/>
            <person name="James K.D."/>
            <person name="Churcher C.M."/>
            <person name="Mungall K.L."/>
            <person name="Baker S."/>
            <person name="Basham D."/>
            <person name="Bentley S.D."/>
            <person name="Brooks K."/>
            <person name="Cerdeno-Tarraga A.-M."/>
            <person name="Chillingworth T."/>
            <person name="Cronin A."/>
            <person name="Davies R.M."/>
            <person name="Davis P."/>
            <person name="Dougan G."/>
            <person name="Feltwell T."/>
            <person name="Hamlin N."/>
            <person name="Holroyd S."/>
            <person name="Jagels K."/>
            <person name="Karlyshev A.V."/>
            <person name="Leather S."/>
            <person name="Moule S."/>
            <person name="Oyston P.C.F."/>
            <person name="Quail M.A."/>
            <person name="Rutherford K.M."/>
            <person name="Simmonds M."/>
            <person name="Skelton J."/>
            <person name="Stevens K."/>
            <person name="Whitehead S."/>
            <person name="Barrell B.G."/>
        </authorList>
    </citation>
    <scope>NUCLEOTIDE SEQUENCE [LARGE SCALE GENOMIC DNA]</scope>
    <source>
        <strain>CO-92 / Biovar Orientalis</strain>
    </source>
</reference>
<reference key="2">
    <citation type="journal article" date="2002" name="J. Bacteriol.">
        <title>Genome sequence of Yersinia pestis KIM.</title>
        <authorList>
            <person name="Deng W."/>
            <person name="Burland V."/>
            <person name="Plunkett G. III"/>
            <person name="Boutin A."/>
            <person name="Mayhew G.F."/>
            <person name="Liss P."/>
            <person name="Perna N.T."/>
            <person name="Rose D.J."/>
            <person name="Mau B."/>
            <person name="Zhou S."/>
            <person name="Schwartz D.C."/>
            <person name="Fetherston J.D."/>
            <person name="Lindler L.E."/>
            <person name="Brubaker R.R."/>
            <person name="Plano G.V."/>
            <person name="Straley S.C."/>
            <person name="McDonough K.A."/>
            <person name="Nilles M.L."/>
            <person name="Matson J.S."/>
            <person name="Blattner F.R."/>
            <person name="Perry R.D."/>
        </authorList>
    </citation>
    <scope>NUCLEOTIDE SEQUENCE [LARGE SCALE GENOMIC DNA]</scope>
    <source>
        <strain>KIM10+ / Biovar Mediaevalis</strain>
    </source>
</reference>
<reference key="3">
    <citation type="journal article" date="2004" name="DNA Res.">
        <title>Complete genome sequence of Yersinia pestis strain 91001, an isolate avirulent to humans.</title>
        <authorList>
            <person name="Song Y."/>
            <person name="Tong Z."/>
            <person name="Wang J."/>
            <person name="Wang L."/>
            <person name="Guo Z."/>
            <person name="Han Y."/>
            <person name="Zhang J."/>
            <person name="Pei D."/>
            <person name="Zhou D."/>
            <person name="Qin H."/>
            <person name="Pang X."/>
            <person name="Han Y."/>
            <person name="Zhai J."/>
            <person name="Li M."/>
            <person name="Cui B."/>
            <person name="Qi Z."/>
            <person name="Jin L."/>
            <person name="Dai R."/>
            <person name="Chen F."/>
            <person name="Li S."/>
            <person name="Ye C."/>
            <person name="Du Z."/>
            <person name="Lin W."/>
            <person name="Wang J."/>
            <person name="Yu J."/>
            <person name="Yang H."/>
            <person name="Wang J."/>
            <person name="Huang P."/>
            <person name="Yang R."/>
        </authorList>
    </citation>
    <scope>NUCLEOTIDE SEQUENCE [LARGE SCALE GENOMIC DNA]</scope>
    <source>
        <strain>91001 / Biovar Mediaevalis</strain>
    </source>
</reference>
<dbReference type="EC" id="2.7.7.56" evidence="1"/>
<dbReference type="EMBL" id="AL590842">
    <property type="protein sequence ID" value="CAL18734.1"/>
    <property type="molecule type" value="Genomic_DNA"/>
</dbReference>
<dbReference type="EMBL" id="AE009952">
    <property type="protein sequence ID" value="AAM83691.1"/>
    <property type="molecule type" value="Genomic_DNA"/>
</dbReference>
<dbReference type="EMBL" id="AE017042">
    <property type="protein sequence ID" value="AAS60326.1"/>
    <property type="molecule type" value="Genomic_DNA"/>
</dbReference>
<dbReference type="PIR" id="AE0006">
    <property type="entry name" value="AE0006"/>
</dbReference>
<dbReference type="RefSeq" id="WP_002208997.1">
    <property type="nucleotide sequence ID" value="NZ_WUCM01000015.1"/>
</dbReference>
<dbReference type="RefSeq" id="YP_002345140.1">
    <property type="nucleotide sequence ID" value="NC_003143.1"/>
</dbReference>
<dbReference type="SMR" id="Q8ZJP8"/>
<dbReference type="IntAct" id="Q8ZJP8">
    <property type="interactions" value="5"/>
</dbReference>
<dbReference type="STRING" id="214092.YPO0044"/>
<dbReference type="PaxDb" id="214092-YPO0044"/>
<dbReference type="DNASU" id="1145044"/>
<dbReference type="EnsemblBacteria" id="AAS60326">
    <property type="protein sequence ID" value="AAS60326"/>
    <property type="gene ID" value="YP_0045"/>
</dbReference>
<dbReference type="GeneID" id="57974546"/>
<dbReference type="KEGG" id="ype:YPO0044"/>
<dbReference type="KEGG" id="ypk:y0097"/>
<dbReference type="KEGG" id="ypm:YP_0045"/>
<dbReference type="PATRIC" id="fig|1028802.3.peg.87"/>
<dbReference type="eggNOG" id="COG0689">
    <property type="taxonomic scope" value="Bacteria"/>
</dbReference>
<dbReference type="HOGENOM" id="CLU_050858_0_0_6"/>
<dbReference type="OMA" id="RYNMAPF"/>
<dbReference type="OrthoDB" id="9802265at2"/>
<dbReference type="Proteomes" id="UP000000815">
    <property type="component" value="Chromosome"/>
</dbReference>
<dbReference type="Proteomes" id="UP000001019">
    <property type="component" value="Chromosome"/>
</dbReference>
<dbReference type="Proteomes" id="UP000002490">
    <property type="component" value="Chromosome"/>
</dbReference>
<dbReference type="GO" id="GO:0000175">
    <property type="term" value="F:3'-5'-RNA exonuclease activity"/>
    <property type="evidence" value="ECO:0007669"/>
    <property type="project" value="UniProtKB-UniRule"/>
</dbReference>
<dbReference type="GO" id="GO:0003723">
    <property type="term" value="F:RNA binding"/>
    <property type="evidence" value="ECO:0000318"/>
    <property type="project" value="GO_Central"/>
</dbReference>
<dbReference type="GO" id="GO:0000049">
    <property type="term" value="F:tRNA binding"/>
    <property type="evidence" value="ECO:0007669"/>
    <property type="project" value="UniProtKB-UniRule"/>
</dbReference>
<dbReference type="GO" id="GO:0009022">
    <property type="term" value="F:tRNA nucleotidyltransferase activity"/>
    <property type="evidence" value="ECO:0007669"/>
    <property type="project" value="UniProtKB-UniRule"/>
</dbReference>
<dbReference type="GO" id="GO:0016075">
    <property type="term" value="P:rRNA catabolic process"/>
    <property type="evidence" value="ECO:0000318"/>
    <property type="project" value="GO_Central"/>
</dbReference>
<dbReference type="GO" id="GO:0006364">
    <property type="term" value="P:rRNA processing"/>
    <property type="evidence" value="ECO:0007669"/>
    <property type="project" value="UniProtKB-KW"/>
</dbReference>
<dbReference type="GO" id="GO:0008033">
    <property type="term" value="P:tRNA processing"/>
    <property type="evidence" value="ECO:0007669"/>
    <property type="project" value="UniProtKB-UniRule"/>
</dbReference>
<dbReference type="CDD" id="cd11362">
    <property type="entry name" value="RNase_PH_bact"/>
    <property type="match status" value="1"/>
</dbReference>
<dbReference type="FunFam" id="3.30.230.70:FF:000003">
    <property type="entry name" value="Ribonuclease PH"/>
    <property type="match status" value="1"/>
</dbReference>
<dbReference type="Gene3D" id="3.30.230.70">
    <property type="entry name" value="GHMP Kinase, N-terminal domain"/>
    <property type="match status" value="1"/>
</dbReference>
<dbReference type="HAMAP" id="MF_00564">
    <property type="entry name" value="RNase_PH"/>
    <property type="match status" value="1"/>
</dbReference>
<dbReference type="InterPro" id="IPR001247">
    <property type="entry name" value="ExoRNase_PH_dom1"/>
</dbReference>
<dbReference type="InterPro" id="IPR015847">
    <property type="entry name" value="ExoRNase_PH_dom2"/>
</dbReference>
<dbReference type="InterPro" id="IPR036345">
    <property type="entry name" value="ExoRNase_PH_dom2_sf"/>
</dbReference>
<dbReference type="InterPro" id="IPR027408">
    <property type="entry name" value="PNPase/RNase_PH_dom_sf"/>
</dbReference>
<dbReference type="InterPro" id="IPR020568">
    <property type="entry name" value="Ribosomal_Su5_D2-typ_SF"/>
</dbReference>
<dbReference type="InterPro" id="IPR050080">
    <property type="entry name" value="RNase_PH"/>
</dbReference>
<dbReference type="InterPro" id="IPR002381">
    <property type="entry name" value="RNase_PH_bac-type"/>
</dbReference>
<dbReference type="InterPro" id="IPR018336">
    <property type="entry name" value="RNase_PH_CS"/>
</dbReference>
<dbReference type="NCBIfam" id="TIGR01966">
    <property type="entry name" value="RNasePH"/>
    <property type="match status" value="1"/>
</dbReference>
<dbReference type="PANTHER" id="PTHR11953">
    <property type="entry name" value="EXOSOME COMPLEX COMPONENT"/>
    <property type="match status" value="1"/>
</dbReference>
<dbReference type="PANTHER" id="PTHR11953:SF0">
    <property type="entry name" value="EXOSOME COMPLEX COMPONENT RRP41"/>
    <property type="match status" value="1"/>
</dbReference>
<dbReference type="Pfam" id="PF01138">
    <property type="entry name" value="RNase_PH"/>
    <property type="match status" value="1"/>
</dbReference>
<dbReference type="Pfam" id="PF03725">
    <property type="entry name" value="RNase_PH_C"/>
    <property type="match status" value="1"/>
</dbReference>
<dbReference type="SUPFAM" id="SSF55666">
    <property type="entry name" value="Ribonuclease PH domain 2-like"/>
    <property type="match status" value="1"/>
</dbReference>
<dbReference type="SUPFAM" id="SSF54211">
    <property type="entry name" value="Ribosomal protein S5 domain 2-like"/>
    <property type="match status" value="1"/>
</dbReference>
<dbReference type="PROSITE" id="PS01277">
    <property type="entry name" value="RIBONUCLEASE_PH"/>
    <property type="match status" value="1"/>
</dbReference>
<sequence length="238" mass="25415">MRPADRAAQQVRPLTLTRNYTKHAEGSVLVEFGDTKVLCTATVEEGVPRFLKGQGQGWITAEYGMLPRSTHSRNAREAAKGKQGGRTLEIQRLIARSLRAAVDLKKLGEFTITLDCDVLQADGGTRTASISGACVALADALNKLVASGKLKANPMKGLVAAVSVGIVKGEALCDLEYVEDSAAETDMNVVMMEDGRMIEVQGTAEGEPFSHEELLALLDLARGGIETIFQAQKAALES</sequence>
<evidence type="ECO:0000255" key="1">
    <source>
        <dbReference type="HAMAP-Rule" id="MF_00564"/>
    </source>
</evidence>
<organism>
    <name type="scientific">Yersinia pestis</name>
    <dbReference type="NCBI Taxonomy" id="632"/>
    <lineage>
        <taxon>Bacteria</taxon>
        <taxon>Pseudomonadati</taxon>
        <taxon>Pseudomonadota</taxon>
        <taxon>Gammaproteobacteria</taxon>
        <taxon>Enterobacterales</taxon>
        <taxon>Yersiniaceae</taxon>
        <taxon>Yersinia</taxon>
    </lineage>
</organism>
<feature type="chain" id="PRO_0000139955" description="Ribonuclease PH">
    <location>
        <begin position="1"/>
        <end position="238"/>
    </location>
</feature>
<feature type="binding site" evidence="1">
    <location>
        <position position="86"/>
    </location>
    <ligand>
        <name>phosphate</name>
        <dbReference type="ChEBI" id="CHEBI:43474"/>
        <note>substrate</note>
    </ligand>
</feature>
<feature type="binding site" evidence="1">
    <location>
        <begin position="124"/>
        <end position="126"/>
    </location>
    <ligand>
        <name>phosphate</name>
        <dbReference type="ChEBI" id="CHEBI:43474"/>
        <note>substrate</note>
    </ligand>
</feature>
<proteinExistence type="inferred from homology"/>
<keyword id="KW-0548">Nucleotidyltransferase</keyword>
<keyword id="KW-1185">Reference proteome</keyword>
<keyword id="KW-0694">RNA-binding</keyword>
<keyword id="KW-0698">rRNA processing</keyword>
<keyword id="KW-0808">Transferase</keyword>
<keyword id="KW-0819">tRNA processing</keyword>
<keyword id="KW-0820">tRNA-binding</keyword>
<protein>
    <recommendedName>
        <fullName evidence="1">Ribonuclease PH</fullName>
        <shortName evidence="1">RNase PH</shortName>
        <ecNumber evidence="1">2.7.7.56</ecNumber>
    </recommendedName>
    <alternativeName>
        <fullName evidence="1">tRNA nucleotidyltransferase</fullName>
    </alternativeName>
</protein>
<accession>Q8ZJP8</accession>
<accession>Q0WKP8</accession>
<name>RNPH_YERPE</name>
<comment type="function">
    <text evidence="1">Phosphorolytic 3'-5' exoribonuclease that plays an important role in tRNA 3'-end maturation. Removes nucleotide residues following the 3'-CCA terminus of tRNAs; can also add nucleotides to the ends of RNA molecules by using nucleoside diphosphates as substrates, but this may not be physiologically important. Probably plays a role in initiation of 16S rRNA degradation (leading to ribosome degradation) during starvation.</text>
</comment>
<comment type="catalytic activity">
    <reaction evidence="1">
        <text>tRNA(n+1) + phosphate = tRNA(n) + a ribonucleoside 5'-diphosphate</text>
        <dbReference type="Rhea" id="RHEA:10628"/>
        <dbReference type="Rhea" id="RHEA-COMP:17343"/>
        <dbReference type="Rhea" id="RHEA-COMP:17344"/>
        <dbReference type="ChEBI" id="CHEBI:43474"/>
        <dbReference type="ChEBI" id="CHEBI:57930"/>
        <dbReference type="ChEBI" id="CHEBI:173114"/>
        <dbReference type="EC" id="2.7.7.56"/>
    </reaction>
</comment>
<comment type="subunit">
    <text evidence="1">Homohexameric ring arranged as a trimer of dimers.</text>
</comment>
<comment type="similarity">
    <text evidence="1">Belongs to the RNase PH family.</text>
</comment>
<gene>
    <name evidence="1" type="primary">rph</name>
    <name type="ordered locus">YPO0044</name>
    <name type="ordered locus">y0097</name>
    <name type="ordered locus">YP_0045</name>
</gene>